<organism>
    <name type="scientific">Cupriavidus necator (strain ATCC 17699 / DSM 428 / KCTC 22496 / NCIMB 10442 / H16 / Stanier 337)</name>
    <name type="common">Ralstonia eutropha</name>
    <dbReference type="NCBI Taxonomy" id="381666"/>
    <lineage>
        <taxon>Bacteria</taxon>
        <taxon>Pseudomonadati</taxon>
        <taxon>Pseudomonadota</taxon>
        <taxon>Betaproteobacteria</taxon>
        <taxon>Burkholderiales</taxon>
        <taxon>Burkholderiaceae</taxon>
        <taxon>Cupriavidus</taxon>
    </lineage>
</organism>
<comment type="similarity">
    <text evidence="1">Belongs to the bacterial ribosomal protein bL35 family.</text>
</comment>
<name>RL35_CUPNH</name>
<protein>
    <recommendedName>
        <fullName evidence="1">Large ribosomal subunit protein bL35</fullName>
    </recommendedName>
    <alternativeName>
        <fullName evidence="3">50S ribosomal protein L35</fullName>
    </alternativeName>
</protein>
<keyword id="KW-1185">Reference proteome</keyword>
<keyword id="KW-0687">Ribonucleoprotein</keyword>
<keyword id="KW-0689">Ribosomal protein</keyword>
<sequence length="65" mass="7549">MPKMKTKKSASKRFTARPNGSFKRGQAFKRHILTKKTTKNKRQLRGTQDVHETNLKSVRAMMPYA</sequence>
<proteinExistence type="inferred from homology"/>
<reference key="1">
    <citation type="journal article" date="2006" name="Nat. Biotechnol.">
        <title>Genome sequence of the bioplastic-producing 'Knallgas' bacterium Ralstonia eutropha H16.</title>
        <authorList>
            <person name="Pohlmann A."/>
            <person name="Fricke W.F."/>
            <person name="Reinecke F."/>
            <person name="Kusian B."/>
            <person name="Liesegang H."/>
            <person name="Cramm R."/>
            <person name="Eitinger T."/>
            <person name="Ewering C."/>
            <person name="Poetter M."/>
            <person name="Schwartz E."/>
            <person name="Strittmatter A."/>
            <person name="Voss I."/>
            <person name="Gottschalk G."/>
            <person name="Steinbuechel A."/>
            <person name="Friedrich B."/>
            <person name="Bowien B."/>
        </authorList>
    </citation>
    <scope>NUCLEOTIDE SEQUENCE [LARGE SCALE GENOMIC DNA]</scope>
    <source>
        <strain>ATCC 17699 / DSM 428 / KCTC 22496 / NCIMB 10442 / H16 / Stanier 337</strain>
    </source>
</reference>
<feature type="chain" id="PRO_1000050750" description="Large ribosomal subunit protein bL35">
    <location>
        <begin position="1"/>
        <end position="65"/>
    </location>
</feature>
<feature type="region of interest" description="Disordered" evidence="2">
    <location>
        <begin position="1"/>
        <end position="65"/>
    </location>
</feature>
<feature type="compositionally biased region" description="Basic residues" evidence="2">
    <location>
        <begin position="1"/>
        <end position="15"/>
    </location>
</feature>
<feature type="compositionally biased region" description="Basic residues" evidence="2">
    <location>
        <begin position="26"/>
        <end position="44"/>
    </location>
</feature>
<accession>Q0KBZ1</accession>
<dbReference type="EMBL" id="AM260479">
    <property type="protein sequence ID" value="CAJ92480.1"/>
    <property type="molecule type" value="Genomic_DNA"/>
</dbReference>
<dbReference type="RefSeq" id="WP_006575466.1">
    <property type="nucleotide sequence ID" value="NZ_CP039287.1"/>
</dbReference>
<dbReference type="SMR" id="Q0KBZ1"/>
<dbReference type="STRING" id="381666.H16_A1341"/>
<dbReference type="GeneID" id="98400631"/>
<dbReference type="KEGG" id="reh:H16_A1341"/>
<dbReference type="eggNOG" id="COG0291">
    <property type="taxonomic scope" value="Bacteria"/>
</dbReference>
<dbReference type="HOGENOM" id="CLU_169643_1_0_4"/>
<dbReference type="OrthoDB" id="47476at2"/>
<dbReference type="Proteomes" id="UP000008210">
    <property type="component" value="Chromosome 1"/>
</dbReference>
<dbReference type="GO" id="GO:0022625">
    <property type="term" value="C:cytosolic large ribosomal subunit"/>
    <property type="evidence" value="ECO:0007669"/>
    <property type="project" value="TreeGrafter"/>
</dbReference>
<dbReference type="GO" id="GO:0003735">
    <property type="term" value="F:structural constituent of ribosome"/>
    <property type="evidence" value="ECO:0007669"/>
    <property type="project" value="InterPro"/>
</dbReference>
<dbReference type="GO" id="GO:0006412">
    <property type="term" value="P:translation"/>
    <property type="evidence" value="ECO:0007669"/>
    <property type="project" value="UniProtKB-UniRule"/>
</dbReference>
<dbReference type="FunFam" id="4.10.410.60:FF:000001">
    <property type="entry name" value="50S ribosomal protein L35"/>
    <property type="match status" value="1"/>
</dbReference>
<dbReference type="Gene3D" id="4.10.410.60">
    <property type="match status" value="1"/>
</dbReference>
<dbReference type="HAMAP" id="MF_00514">
    <property type="entry name" value="Ribosomal_bL35"/>
    <property type="match status" value="1"/>
</dbReference>
<dbReference type="InterPro" id="IPR001706">
    <property type="entry name" value="Ribosomal_bL35"/>
</dbReference>
<dbReference type="InterPro" id="IPR021137">
    <property type="entry name" value="Ribosomal_bL35-like"/>
</dbReference>
<dbReference type="InterPro" id="IPR018265">
    <property type="entry name" value="Ribosomal_bL35_CS"/>
</dbReference>
<dbReference type="InterPro" id="IPR037229">
    <property type="entry name" value="Ribosomal_bL35_sf"/>
</dbReference>
<dbReference type="NCBIfam" id="TIGR00001">
    <property type="entry name" value="rpmI_bact"/>
    <property type="match status" value="1"/>
</dbReference>
<dbReference type="PANTHER" id="PTHR33343">
    <property type="entry name" value="54S RIBOSOMAL PROTEIN BL35M"/>
    <property type="match status" value="1"/>
</dbReference>
<dbReference type="PANTHER" id="PTHR33343:SF1">
    <property type="entry name" value="LARGE RIBOSOMAL SUBUNIT PROTEIN BL35M"/>
    <property type="match status" value="1"/>
</dbReference>
<dbReference type="Pfam" id="PF01632">
    <property type="entry name" value="Ribosomal_L35p"/>
    <property type="match status" value="1"/>
</dbReference>
<dbReference type="PRINTS" id="PR00064">
    <property type="entry name" value="RIBOSOMALL35"/>
</dbReference>
<dbReference type="SUPFAM" id="SSF143034">
    <property type="entry name" value="L35p-like"/>
    <property type="match status" value="1"/>
</dbReference>
<dbReference type="PROSITE" id="PS00936">
    <property type="entry name" value="RIBOSOMAL_L35"/>
    <property type="match status" value="1"/>
</dbReference>
<evidence type="ECO:0000255" key="1">
    <source>
        <dbReference type="HAMAP-Rule" id="MF_00514"/>
    </source>
</evidence>
<evidence type="ECO:0000256" key="2">
    <source>
        <dbReference type="SAM" id="MobiDB-lite"/>
    </source>
</evidence>
<evidence type="ECO:0000305" key="3"/>
<gene>
    <name evidence="1" type="primary">rpmI</name>
    <name type="ordered locus">H16_A1341</name>
</gene>